<reference key="1">
    <citation type="journal article" date="1992" name="J. Mol. Biol.">
        <title>Large ATP synthase operon of the red alga Antithamnion sp. resembles the corresponding operon in cyanobacteria.</title>
        <authorList>
            <person name="Kostrzewa M."/>
            <person name="Zetsche K."/>
        </authorList>
    </citation>
    <scope>NUCLEOTIDE SEQUENCE [GENOMIC DNA]</scope>
    <source>
        <strain>LB 95.79</strain>
    </source>
</reference>
<feature type="chain" id="PRO_0000112182" description="ATP synthase subunit c, chloroplastic">
    <location>
        <begin position="1"/>
        <end position="82"/>
    </location>
</feature>
<feature type="transmembrane region" description="Helical" evidence="1">
    <location>
        <begin position="4"/>
        <end position="24"/>
    </location>
</feature>
<feature type="transmembrane region" description="Helical" evidence="1">
    <location>
        <begin position="57"/>
        <end position="77"/>
    </location>
</feature>
<feature type="site" description="Reversibly protonated during proton transport" evidence="1">
    <location>
        <position position="61"/>
    </location>
</feature>
<protein>
    <recommendedName>
        <fullName evidence="1">ATP synthase subunit c, chloroplastic</fullName>
    </recommendedName>
    <alternativeName>
        <fullName evidence="1">ATP synthase F(0) sector subunit c</fullName>
    </alternativeName>
    <alternativeName>
        <fullName evidence="1">ATPase subunit III</fullName>
    </alternativeName>
    <alternativeName>
        <fullName evidence="1">F-type ATPase subunit c</fullName>
        <shortName evidence="1">F-ATPase subunit c</shortName>
    </alternativeName>
    <alternativeName>
        <fullName evidence="1">Lipid-binding protein</fullName>
    </alternativeName>
</protein>
<evidence type="ECO:0000255" key="1">
    <source>
        <dbReference type="HAMAP-Rule" id="MF_01396"/>
    </source>
</evidence>
<gene>
    <name evidence="1" type="primary">atpH</name>
</gene>
<sequence>MDSIISAASVIAAGLAVGLAAIGPGIGQGSAAANAVEGIARQPEVEGKIRGTLLLSLAFMESLTIYGLVVALSLLFANPYTG</sequence>
<accession>Q02851</accession>
<geneLocation type="chloroplast"/>
<proteinExistence type="inferred from homology"/>
<name>ATPH_ANTSP</name>
<keyword id="KW-0066">ATP synthesis</keyword>
<keyword id="KW-0138">CF(0)</keyword>
<keyword id="KW-0150">Chloroplast</keyword>
<keyword id="KW-0375">Hydrogen ion transport</keyword>
<keyword id="KW-0406">Ion transport</keyword>
<keyword id="KW-0446">Lipid-binding</keyword>
<keyword id="KW-0472">Membrane</keyword>
<keyword id="KW-0934">Plastid</keyword>
<keyword id="KW-0793">Thylakoid</keyword>
<keyword id="KW-0812">Transmembrane</keyword>
<keyword id="KW-1133">Transmembrane helix</keyword>
<keyword id="KW-0813">Transport</keyword>
<dbReference type="EMBL" id="X63382">
    <property type="protein sequence ID" value="CAA44980.1"/>
    <property type="molecule type" value="Genomic_DNA"/>
</dbReference>
<dbReference type="PIR" id="S26958">
    <property type="entry name" value="S26958"/>
</dbReference>
<dbReference type="SMR" id="Q02851"/>
<dbReference type="GO" id="GO:0009535">
    <property type="term" value="C:chloroplast thylakoid membrane"/>
    <property type="evidence" value="ECO:0007669"/>
    <property type="project" value="UniProtKB-SubCell"/>
</dbReference>
<dbReference type="GO" id="GO:0045259">
    <property type="term" value="C:proton-transporting ATP synthase complex"/>
    <property type="evidence" value="ECO:0007669"/>
    <property type="project" value="UniProtKB-KW"/>
</dbReference>
<dbReference type="GO" id="GO:0033177">
    <property type="term" value="C:proton-transporting two-sector ATPase complex, proton-transporting domain"/>
    <property type="evidence" value="ECO:0007669"/>
    <property type="project" value="InterPro"/>
</dbReference>
<dbReference type="GO" id="GO:0008289">
    <property type="term" value="F:lipid binding"/>
    <property type="evidence" value="ECO:0007669"/>
    <property type="project" value="UniProtKB-KW"/>
</dbReference>
<dbReference type="GO" id="GO:0046933">
    <property type="term" value="F:proton-transporting ATP synthase activity, rotational mechanism"/>
    <property type="evidence" value="ECO:0007669"/>
    <property type="project" value="UniProtKB-UniRule"/>
</dbReference>
<dbReference type="CDD" id="cd18183">
    <property type="entry name" value="ATP-synt_Fo_c_ATPH"/>
    <property type="match status" value="1"/>
</dbReference>
<dbReference type="FunFam" id="1.20.20.10:FF:000001">
    <property type="entry name" value="ATP synthase subunit c, chloroplastic"/>
    <property type="match status" value="1"/>
</dbReference>
<dbReference type="Gene3D" id="1.20.20.10">
    <property type="entry name" value="F1F0 ATP synthase subunit C"/>
    <property type="match status" value="1"/>
</dbReference>
<dbReference type="HAMAP" id="MF_01396">
    <property type="entry name" value="ATP_synth_c_bact"/>
    <property type="match status" value="1"/>
</dbReference>
<dbReference type="InterPro" id="IPR005953">
    <property type="entry name" value="ATP_synth_csu_bac/chlpt"/>
</dbReference>
<dbReference type="InterPro" id="IPR000454">
    <property type="entry name" value="ATP_synth_F0_csu"/>
</dbReference>
<dbReference type="InterPro" id="IPR020537">
    <property type="entry name" value="ATP_synth_F0_csu_DDCD_BS"/>
</dbReference>
<dbReference type="InterPro" id="IPR038662">
    <property type="entry name" value="ATP_synth_F0_csu_sf"/>
</dbReference>
<dbReference type="InterPro" id="IPR002379">
    <property type="entry name" value="ATPase_proteolipid_c-like_dom"/>
</dbReference>
<dbReference type="InterPro" id="IPR035921">
    <property type="entry name" value="F/V-ATP_Csub_sf"/>
</dbReference>
<dbReference type="NCBIfam" id="TIGR01260">
    <property type="entry name" value="ATP_synt_c"/>
    <property type="match status" value="1"/>
</dbReference>
<dbReference type="NCBIfam" id="NF005608">
    <property type="entry name" value="PRK07354.1"/>
    <property type="match status" value="1"/>
</dbReference>
<dbReference type="PANTHER" id="PTHR10031">
    <property type="entry name" value="ATP SYNTHASE LIPID-BINDING PROTEIN, MITOCHONDRIAL"/>
    <property type="match status" value="1"/>
</dbReference>
<dbReference type="PANTHER" id="PTHR10031:SF0">
    <property type="entry name" value="ATPASE PROTEIN 9"/>
    <property type="match status" value="1"/>
</dbReference>
<dbReference type="Pfam" id="PF00137">
    <property type="entry name" value="ATP-synt_C"/>
    <property type="match status" value="1"/>
</dbReference>
<dbReference type="PRINTS" id="PR00124">
    <property type="entry name" value="ATPASEC"/>
</dbReference>
<dbReference type="SUPFAM" id="SSF81333">
    <property type="entry name" value="F1F0 ATP synthase subunit C"/>
    <property type="match status" value="1"/>
</dbReference>
<dbReference type="PROSITE" id="PS00605">
    <property type="entry name" value="ATPASE_C"/>
    <property type="match status" value="1"/>
</dbReference>
<organism>
    <name type="scientific">Antithamnion sp.</name>
    <name type="common">Red alga</name>
    <dbReference type="NCBI Taxonomy" id="2767"/>
    <lineage>
        <taxon>Eukaryota</taxon>
        <taxon>Rhodophyta</taxon>
        <taxon>Florideophyceae</taxon>
        <taxon>Rhodymeniophycidae</taxon>
        <taxon>Ceramiales</taxon>
        <taxon>Ceramiaceae</taxon>
        <taxon>Antithamnion</taxon>
    </lineage>
</organism>
<comment type="function">
    <text evidence="1">F(1)F(0) ATP synthase produces ATP from ADP in the presence of a proton or sodium gradient. F-type ATPases consist of two structural domains, F(1) containing the extramembraneous catalytic core and F(0) containing the membrane proton channel, linked together by a central stalk and a peripheral stalk. During catalysis, ATP synthesis in the catalytic domain of F(1) is coupled via a rotary mechanism of the central stalk subunits to proton translocation.</text>
</comment>
<comment type="function">
    <text evidence="1">Key component of the F(0) channel; it plays a direct role in translocation across the membrane. A homomeric c-ring of between 10-14 subunits forms the central stalk rotor element with the F(1) delta and epsilon subunits.</text>
</comment>
<comment type="subunit">
    <text evidence="1">F-type ATPases have 2 components, F(1) - the catalytic core - and F(0) - the membrane proton channel. F(1) has five subunits: alpha(3), beta(3), gamma(1), delta(1), epsilon(1). F(0) has four main subunits: a(1), b(1), b'(1) and c(10-14). The alpha and beta chains form an alternating ring which encloses part of the gamma chain. F(1) is attached to F(0) by a central stalk formed by the gamma and epsilon chains, while a peripheral stalk is formed by the delta, b and b' chains.</text>
</comment>
<comment type="subcellular location">
    <subcellularLocation>
        <location evidence="1">Plastid</location>
        <location evidence="1">Chloroplast thylakoid membrane</location>
        <topology evidence="1">Multi-pass membrane protein</topology>
    </subcellularLocation>
</comment>
<comment type="miscellaneous">
    <text>In plastids the F-type ATPase is also known as CF(1)CF(0).</text>
</comment>
<comment type="similarity">
    <text evidence="1">Belongs to the ATPase C chain family.</text>
</comment>